<evidence type="ECO:0000255" key="1">
    <source>
        <dbReference type="HAMAP-Rule" id="MF_00709"/>
    </source>
</evidence>
<reference key="1">
    <citation type="submission" date="2007-09" db="EMBL/GenBank/DDBJ databases">
        <title>Complete sequence of chromosome of Serratia proteamaculans 568.</title>
        <authorList>
            <consortium name="US DOE Joint Genome Institute"/>
            <person name="Copeland A."/>
            <person name="Lucas S."/>
            <person name="Lapidus A."/>
            <person name="Barry K."/>
            <person name="Glavina del Rio T."/>
            <person name="Dalin E."/>
            <person name="Tice H."/>
            <person name="Pitluck S."/>
            <person name="Chain P."/>
            <person name="Malfatti S."/>
            <person name="Shin M."/>
            <person name="Vergez L."/>
            <person name="Schmutz J."/>
            <person name="Larimer F."/>
            <person name="Land M."/>
            <person name="Hauser L."/>
            <person name="Kyrpides N."/>
            <person name="Kim E."/>
            <person name="Taghavi S."/>
            <person name="Newman L."/>
            <person name="Vangronsveld J."/>
            <person name="van der Lelie D."/>
            <person name="Richardson P."/>
        </authorList>
    </citation>
    <scope>NUCLEOTIDE SEQUENCE [LARGE SCALE GENOMIC DNA]</scope>
    <source>
        <strain>568</strain>
    </source>
</reference>
<accession>A8G8T4</accession>
<organism>
    <name type="scientific">Serratia proteamaculans (strain 568)</name>
    <dbReference type="NCBI Taxonomy" id="399741"/>
    <lineage>
        <taxon>Bacteria</taxon>
        <taxon>Pseudomonadati</taxon>
        <taxon>Pseudomonadota</taxon>
        <taxon>Gammaproteobacteria</taxon>
        <taxon>Enterobacterales</taxon>
        <taxon>Yersiniaceae</taxon>
        <taxon>Serratia</taxon>
    </lineage>
</organism>
<proteinExistence type="inferred from homology"/>
<feature type="chain" id="PRO_1000062071" description="Fumarate reductase subunit D">
    <location>
        <begin position="1"/>
        <end position="119"/>
    </location>
</feature>
<feature type="transmembrane region" description="Helical" evidence="1">
    <location>
        <begin position="25"/>
        <end position="45"/>
    </location>
</feature>
<feature type="transmembrane region" description="Helical" evidence="1">
    <location>
        <begin position="55"/>
        <end position="75"/>
    </location>
</feature>
<feature type="transmembrane region" description="Helical" evidence="1">
    <location>
        <begin position="99"/>
        <end position="119"/>
    </location>
</feature>
<keyword id="KW-0997">Cell inner membrane</keyword>
<keyword id="KW-1003">Cell membrane</keyword>
<keyword id="KW-0472">Membrane</keyword>
<keyword id="KW-0812">Transmembrane</keyword>
<keyword id="KW-1133">Transmembrane helix</keyword>
<dbReference type="EMBL" id="CP000826">
    <property type="protein sequence ID" value="ABV39524.1"/>
    <property type="molecule type" value="Genomic_DNA"/>
</dbReference>
<dbReference type="SMR" id="A8G8T4"/>
<dbReference type="STRING" id="399741.Spro_0416"/>
<dbReference type="KEGG" id="spe:Spro_0416"/>
<dbReference type="eggNOG" id="COG3080">
    <property type="taxonomic scope" value="Bacteria"/>
</dbReference>
<dbReference type="HOGENOM" id="CLU_168367_0_0_6"/>
<dbReference type="OrthoDB" id="9804636at2"/>
<dbReference type="GO" id="GO:0045283">
    <property type="term" value="C:fumarate reductase complex"/>
    <property type="evidence" value="ECO:0007669"/>
    <property type="project" value="UniProtKB-UniRule"/>
</dbReference>
<dbReference type="GO" id="GO:0005886">
    <property type="term" value="C:plasma membrane"/>
    <property type="evidence" value="ECO:0007669"/>
    <property type="project" value="UniProtKB-SubCell"/>
</dbReference>
<dbReference type="GO" id="GO:0000104">
    <property type="term" value="F:succinate dehydrogenase activity"/>
    <property type="evidence" value="ECO:0007669"/>
    <property type="project" value="UniProtKB-UniRule"/>
</dbReference>
<dbReference type="GO" id="GO:0006106">
    <property type="term" value="P:fumarate metabolic process"/>
    <property type="evidence" value="ECO:0007669"/>
    <property type="project" value="InterPro"/>
</dbReference>
<dbReference type="CDD" id="cd00547">
    <property type="entry name" value="QFR_TypeD_subunitD"/>
    <property type="match status" value="1"/>
</dbReference>
<dbReference type="FunFam" id="1.20.1300.10:FF:000002">
    <property type="entry name" value="Fumarate reductase subunit D"/>
    <property type="match status" value="1"/>
</dbReference>
<dbReference type="Gene3D" id="1.20.1300.10">
    <property type="entry name" value="Fumarate reductase/succinate dehydrogenase, transmembrane subunit"/>
    <property type="match status" value="1"/>
</dbReference>
<dbReference type="HAMAP" id="MF_00709">
    <property type="entry name" value="Fumarate_red_D"/>
    <property type="match status" value="1"/>
</dbReference>
<dbReference type="InterPro" id="IPR003418">
    <property type="entry name" value="Fumarate_red_D"/>
</dbReference>
<dbReference type="InterPro" id="IPR034804">
    <property type="entry name" value="SQR/QFR_C/D"/>
</dbReference>
<dbReference type="NCBIfam" id="NF003977">
    <property type="entry name" value="PRK05470.1-1"/>
    <property type="match status" value="1"/>
</dbReference>
<dbReference type="Pfam" id="PF02313">
    <property type="entry name" value="Fumarate_red_D"/>
    <property type="match status" value="1"/>
</dbReference>
<dbReference type="PIRSF" id="PIRSF000179">
    <property type="entry name" value="FrdD"/>
    <property type="match status" value="1"/>
</dbReference>
<dbReference type="SUPFAM" id="SSF81343">
    <property type="entry name" value="Fumarate reductase respiratory complex transmembrane subunits"/>
    <property type="match status" value="1"/>
</dbReference>
<protein>
    <recommendedName>
        <fullName evidence="1">Fumarate reductase subunit D</fullName>
    </recommendedName>
    <alternativeName>
        <fullName evidence="1">Fumarate reductase 13 kDa hydrophobic protein</fullName>
    </alternativeName>
    <alternativeName>
        <fullName evidence="1">Quinol-fumarate reductase subunit D</fullName>
        <shortName evidence="1">QFR subunit D</shortName>
    </alternativeName>
</protein>
<gene>
    <name evidence="1" type="primary">frdD</name>
    <name type="ordered locus">Spro_0416</name>
</gene>
<sequence length="119" mass="12921">MINQAPKRSDEPVFWGLFGAGGMWGAIIAPAIVLLVGILLPLGLFPGDALGYDRILAFCQSLIGRLFLLLMIILPLWCGLHRIHHAMHDLKIHVPAGKWVFYGLAAILSVVTVIGVVTL</sequence>
<comment type="function">
    <text evidence="1">Two distinct, membrane-bound, FAD-containing enzymes are responsible for the catalysis of fumarate and succinate interconversion; fumarate reductase is used in anaerobic growth, and succinate dehydrogenase is used in aerobic growth. Anchors the catalytic components of the fumarate reductase complex to the cell inner membrane, binds quinones.</text>
</comment>
<comment type="subunit">
    <text evidence="1">Part of an enzyme complex containing four subunits: a flavoprotein (FrdA), an iron-sulfur protein (FrdB), and two hydrophobic anchor proteins (FrdC and FrdD).</text>
</comment>
<comment type="subcellular location">
    <subcellularLocation>
        <location evidence="1">Cell inner membrane</location>
        <topology evidence="1">Multi-pass membrane protein</topology>
    </subcellularLocation>
</comment>
<comment type="similarity">
    <text evidence="1">Belongs to the FrdD family.</text>
</comment>
<name>FRDD_SERP5</name>